<feature type="chain" id="PRO_0000090855" description="Mothers against decapentaplegic homolog 2">
    <location>
        <begin position="1"/>
        <end position="468"/>
    </location>
</feature>
<feature type="domain" description="MH1" evidence="3">
    <location>
        <begin position="10"/>
        <end position="177"/>
    </location>
</feature>
<feature type="domain" description="MH2" evidence="4">
    <location>
        <begin position="275"/>
        <end position="468"/>
    </location>
</feature>
<feature type="region of interest" description="Disordered" evidence="5">
    <location>
        <begin position="224"/>
        <end position="254"/>
    </location>
</feature>
<feature type="compositionally biased region" description="Polar residues" evidence="5">
    <location>
        <begin position="234"/>
        <end position="244"/>
    </location>
</feature>
<feature type="binding site" evidence="1">
    <location>
        <position position="75"/>
    </location>
    <ligand>
        <name>Zn(2+)</name>
        <dbReference type="ChEBI" id="CHEBI:29105"/>
    </ligand>
</feature>
<feature type="binding site" evidence="1">
    <location>
        <position position="150"/>
    </location>
    <ligand>
        <name>Zn(2+)</name>
        <dbReference type="ChEBI" id="CHEBI:29105"/>
    </ligand>
</feature>
<feature type="binding site" evidence="1">
    <location>
        <position position="162"/>
    </location>
    <ligand>
        <name>Zn(2+)</name>
        <dbReference type="ChEBI" id="CHEBI:29105"/>
    </ligand>
</feature>
<feature type="binding site" evidence="1">
    <location>
        <position position="167"/>
    </location>
    <ligand>
        <name>Zn(2+)</name>
        <dbReference type="ChEBI" id="CHEBI:29105"/>
    </ligand>
</feature>
<feature type="sequence conflict" description="In Ref. 1; AAF06737." evidence="8" ref="1">
    <original>G</original>
    <variation>C</variation>
    <location>
        <position position="315"/>
    </location>
</feature>
<protein>
    <recommendedName>
        <fullName>Mothers against decapentaplegic homolog 2</fullName>
        <shortName>MAD homolog 2</shortName>
        <shortName>Mothers against DPP homolog 2</shortName>
    </recommendedName>
    <alternativeName>
        <fullName>SMAD family member 2</fullName>
        <shortName>SMAD 2</shortName>
        <shortName>Smad2</shortName>
    </alternativeName>
</protein>
<organism>
    <name type="scientific">Danio rerio</name>
    <name type="common">Zebrafish</name>
    <name type="synonym">Brachydanio rerio</name>
    <dbReference type="NCBI Taxonomy" id="7955"/>
    <lineage>
        <taxon>Eukaryota</taxon>
        <taxon>Metazoa</taxon>
        <taxon>Chordata</taxon>
        <taxon>Craniata</taxon>
        <taxon>Vertebrata</taxon>
        <taxon>Euteleostomi</taxon>
        <taxon>Actinopterygii</taxon>
        <taxon>Neopterygii</taxon>
        <taxon>Teleostei</taxon>
        <taxon>Ostariophysi</taxon>
        <taxon>Cypriniformes</taxon>
        <taxon>Danionidae</taxon>
        <taxon>Danioninae</taxon>
        <taxon>Danio</taxon>
    </lineage>
</organism>
<accession>Q9I9P9</accession>
<accession>Q4V964</accession>
<accession>Q9PUN4</accession>
<dbReference type="EMBL" id="AF168774">
    <property type="protein sequence ID" value="AAF06737.1"/>
    <property type="molecule type" value="mRNA"/>
</dbReference>
<dbReference type="EMBL" id="AF229022">
    <property type="protein sequence ID" value="AAF66239.1"/>
    <property type="molecule type" value="mRNA"/>
</dbReference>
<dbReference type="EMBL" id="BC097043">
    <property type="protein sequence ID" value="AAH97043.1"/>
    <property type="molecule type" value="mRNA"/>
</dbReference>
<dbReference type="RefSeq" id="NP_001276944.1">
    <property type="nucleotide sequence ID" value="NM_001290015.1"/>
</dbReference>
<dbReference type="RefSeq" id="NP_571441.3">
    <property type="nucleotide sequence ID" value="NM_131366.3"/>
</dbReference>
<dbReference type="SMR" id="Q9I9P9"/>
<dbReference type="DIP" id="DIP-41211N"/>
<dbReference type="FunCoup" id="Q9I9P9">
    <property type="interactions" value="4442"/>
</dbReference>
<dbReference type="STRING" id="7955.ENSDARP00000106756"/>
<dbReference type="iPTMnet" id="Q9I9P9"/>
<dbReference type="PaxDb" id="7955-ENSDARP00000111803"/>
<dbReference type="ABCD" id="Q9I9P9">
    <property type="antibodies" value="1 sequenced antibody"/>
</dbReference>
<dbReference type="Ensembl" id="ENSDART00000044756">
    <property type="protein sequence ID" value="ENSDARP00000044755"/>
    <property type="gene ID" value="ENSDARG00000006389"/>
</dbReference>
<dbReference type="Ensembl" id="ENSDART00000128579">
    <property type="protein sequence ID" value="ENSDARP00000111803"/>
    <property type="gene ID" value="ENSDARG00000006389"/>
</dbReference>
<dbReference type="Ensembl" id="ENSDART00000184617">
    <property type="protein sequence ID" value="ENSDARP00000145128"/>
    <property type="gene ID" value="ENSDARG00000006389"/>
</dbReference>
<dbReference type="GeneID" id="30639"/>
<dbReference type="KEGG" id="dre:30639"/>
<dbReference type="AGR" id="ZFIN:ZDB-GENE-990603-7"/>
<dbReference type="CTD" id="4087"/>
<dbReference type="ZFIN" id="ZDB-GENE-990603-7">
    <property type="gene designation" value="smad2"/>
</dbReference>
<dbReference type="eggNOG" id="KOG3701">
    <property type="taxonomic scope" value="Eukaryota"/>
</dbReference>
<dbReference type="InParanoid" id="Q9I9P9"/>
<dbReference type="OrthoDB" id="5794312at2759"/>
<dbReference type="PhylomeDB" id="Q9I9P9"/>
<dbReference type="Reactome" id="R-DRE-1502540">
    <property type="pathway name" value="Signaling by Activin"/>
</dbReference>
<dbReference type="Reactome" id="R-DRE-2173788">
    <property type="pathway name" value="Downregulation of TGF-beta receptor signaling"/>
</dbReference>
<dbReference type="Reactome" id="R-DRE-2173789">
    <property type="pathway name" value="TGF-beta receptor signaling activates SMADs"/>
</dbReference>
<dbReference type="Reactome" id="R-DRE-2173795">
    <property type="pathway name" value="Downregulation of SMAD2/3:SMAD4 transcriptional activity"/>
</dbReference>
<dbReference type="Reactome" id="R-DRE-5689880">
    <property type="pathway name" value="Ub-specific processing proteases"/>
</dbReference>
<dbReference type="SignaLink" id="Q9I9P9"/>
<dbReference type="PRO" id="PR:Q9I9P9"/>
<dbReference type="Proteomes" id="UP000000437">
    <property type="component" value="Chromosome 10"/>
</dbReference>
<dbReference type="Bgee" id="ENSDARG00000006389">
    <property type="expression patterns" value="Expressed in cleaving embryo and 33 other cell types or tissues"/>
</dbReference>
<dbReference type="ExpressionAtlas" id="Q9I9P9">
    <property type="expression patterns" value="baseline and differential"/>
</dbReference>
<dbReference type="GO" id="GO:0000785">
    <property type="term" value="C:chromatin"/>
    <property type="evidence" value="ECO:0000314"/>
    <property type="project" value="ZFIN"/>
</dbReference>
<dbReference type="GO" id="GO:0005737">
    <property type="term" value="C:cytoplasm"/>
    <property type="evidence" value="ECO:0007669"/>
    <property type="project" value="UniProtKB-SubCell"/>
</dbReference>
<dbReference type="GO" id="GO:0071144">
    <property type="term" value="C:heteromeric SMAD protein complex"/>
    <property type="evidence" value="ECO:0000318"/>
    <property type="project" value="GO_Central"/>
</dbReference>
<dbReference type="GO" id="GO:0005634">
    <property type="term" value="C:nucleus"/>
    <property type="evidence" value="ECO:0000314"/>
    <property type="project" value="ZFIN"/>
</dbReference>
<dbReference type="GO" id="GO:0005667">
    <property type="term" value="C:transcription regulator complex"/>
    <property type="evidence" value="ECO:0000304"/>
    <property type="project" value="ZFIN"/>
</dbReference>
<dbReference type="GO" id="GO:0003700">
    <property type="term" value="F:DNA-binding transcription factor activity"/>
    <property type="evidence" value="ECO:0000303"/>
    <property type="project" value="UniProtKB"/>
</dbReference>
<dbReference type="GO" id="GO:0000981">
    <property type="term" value="F:DNA-binding transcription factor activity, RNA polymerase II-specific"/>
    <property type="evidence" value="ECO:0000314"/>
    <property type="project" value="ZFIN"/>
</dbReference>
<dbReference type="GO" id="GO:0070411">
    <property type="term" value="F:I-SMAD binding"/>
    <property type="evidence" value="ECO:0000318"/>
    <property type="project" value="GO_Central"/>
</dbReference>
<dbReference type="GO" id="GO:0046872">
    <property type="term" value="F:metal ion binding"/>
    <property type="evidence" value="ECO:0007669"/>
    <property type="project" value="UniProtKB-KW"/>
</dbReference>
<dbReference type="GO" id="GO:0000978">
    <property type="term" value="F:RNA polymerase II cis-regulatory region sequence-specific DNA binding"/>
    <property type="evidence" value="ECO:0000314"/>
    <property type="project" value="ZFIN"/>
</dbReference>
<dbReference type="GO" id="GO:0043565">
    <property type="term" value="F:sequence-specific DNA binding"/>
    <property type="evidence" value="ECO:0000314"/>
    <property type="project" value="ZFIN"/>
</dbReference>
<dbReference type="GO" id="GO:0032924">
    <property type="term" value="P:activin receptor signaling pathway"/>
    <property type="evidence" value="ECO:0000318"/>
    <property type="project" value="GO_Central"/>
</dbReference>
<dbReference type="GO" id="GO:0009653">
    <property type="term" value="P:anatomical structure morphogenesis"/>
    <property type="evidence" value="ECO:0000318"/>
    <property type="project" value="GO_Central"/>
</dbReference>
<dbReference type="GO" id="GO:0030154">
    <property type="term" value="P:cell differentiation"/>
    <property type="evidence" value="ECO:0000318"/>
    <property type="project" value="GO_Central"/>
</dbReference>
<dbReference type="GO" id="GO:0060028">
    <property type="term" value="P:convergent extension involved in axis elongation"/>
    <property type="evidence" value="ECO:0000315"/>
    <property type="project" value="ZFIN"/>
</dbReference>
<dbReference type="GO" id="GO:0009880">
    <property type="term" value="P:embryonic pattern specification"/>
    <property type="evidence" value="ECO:0000315"/>
    <property type="project" value="UniProtKB"/>
</dbReference>
<dbReference type="GO" id="GO:0035556">
    <property type="term" value="P:intracellular signal transduction"/>
    <property type="evidence" value="ECO:0000316"/>
    <property type="project" value="UniProtKB"/>
</dbReference>
<dbReference type="GO" id="GO:0000122">
    <property type="term" value="P:negative regulation of transcription by RNA polymerase II"/>
    <property type="evidence" value="ECO:0000315"/>
    <property type="project" value="ZFIN"/>
</dbReference>
<dbReference type="GO" id="GO:0021999">
    <property type="term" value="P:neural plate anterior/posterior regionalization"/>
    <property type="evidence" value="ECO:0000316"/>
    <property type="project" value="ZFIN"/>
</dbReference>
<dbReference type="GO" id="GO:0038092">
    <property type="term" value="P:nodal signaling pathway"/>
    <property type="evidence" value="ECO:0000314"/>
    <property type="project" value="ZFIN"/>
</dbReference>
<dbReference type="GO" id="GO:0060282">
    <property type="term" value="P:positive regulation of oocyte development"/>
    <property type="evidence" value="ECO:0000315"/>
    <property type="project" value="ZFIN"/>
</dbReference>
<dbReference type="GO" id="GO:0045944">
    <property type="term" value="P:positive regulation of transcription by RNA polymerase II"/>
    <property type="evidence" value="ECO:0000318"/>
    <property type="project" value="GO_Central"/>
</dbReference>
<dbReference type="GO" id="GO:0006355">
    <property type="term" value="P:regulation of DNA-templated transcription"/>
    <property type="evidence" value="ECO:0000353"/>
    <property type="project" value="ZFIN"/>
</dbReference>
<dbReference type="GO" id="GO:0006357">
    <property type="term" value="P:regulation of transcription by RNA polymerase II"/>
    <property type="evidence" value="ECO:0000316"/>
    <property type="project" value="ZFIN"/>
</dbReference>
<dbReference type="GO" id="GO:0060395">
    <property type="term" value="P:SMAD protein signal transduction"/>
    <property type="evidence" value="ECO:0000318"/>
    <property type="project" value="GO_Central"/>
</dbReference>
<dbReference type="GO" id="GO:0007179">
    <property type="term" value="P:transforming growth factor beta receptor signaling pathway"/>
    <property type="evidence" value="ECO:0000318"/>
    <property type="project" value="GO_Central"/>
</dbReference>
<dbReference type="CDD" id="cd10491">
    <property type="entry name" value="MH1_SMAD_2_3"/>
    <property type="match status" value="1"/>
</dbReference>
<dbReference type="CDD" id="cd10985">
    <property type="entry name" value="MH2_SMAD_2_3"/>
    <property type="match status" value="1"/>
</dbReference>
<dbReference type="FunFam" id="2.60.200.10:FF:000001">
    <property type="entry name" value="Mothers against decapentaplegic homolog"/>
    <property type="match status" value="1"/>
</dbReference>
<dbReference type="Gene3D" id="2.60.200.10">
    <property type="match status" value="1"/>
</dbReference>
<dbReference type="Gene3D" id="3.90.520.10">
    <property type="entry name" value="SMAD MH1 domain"/>
    <property type="match status" value="1"/>
</dbReference>
<dbReference type="InterPro" id="IPR013790">
    <property type="entry name" value="Dwarfin"/>
</dbReference>
<dbReference type="InterPro" id="IPR003619">
    <property type="entry name" value="MAD_homology1_Dwarfin-type"/>
</dbReference>
<dbReference type="InterPro" id="IPR013019">
    <property type="entry name" value="MAD_homology_MH1"/>
</dbReference>
<dbReference type="InterPro" id="IPR017855">
    <property type="entry name" value="SMAD-like_dom_sf"/>
</dbReference>
<dbReference type="InterPro" id="IPR001132">
    <property type="entry name" value="SMAD_dom_Dwarfin-type"/>
</dbReference>
<dbReference type="InterPro" id="IPR008984">
    <property type="entry name" value="SMAD_FHA_dom_sf"/>
</dbReference>
<dbReference type="InterPro" id="IPR036578">
    <property type="entry name" value="SMAD_MH1_sf"/>
</dbReference>
<dbReference type="PANTHER" id="PTHR13703:SF42">
    <property type="entry name" value="MOTHERS AGAINST DECAPENTAPLEGIC HOMOLOG 2"/>
    <property type="match status" value="1"/>
</dbReference>
<dbReference type="PANTHER" id="PTHR13703">
    <property type="entry name" value="SMAD"/>
    <property type="match status" value="1"/>
</dbReference>
<dbReference type="Pfam" id="PF03165">
    <property type="entry name" value="MH1"/>
    <property type="match status" value="1"/>
</dbReference>
<dbReference type="Pfam" id="PF03166">
    <property type="entry name" value="MH2"/>
    <property type="match status" value="1"/>
</dbReference>
<dbReference type="SMART" id="SM00523">
    <property type="entry name" value="DWA"/>
    <property type="match status" value="1"/>
</dbReference>
<dbReference type="SMART" id="SM00524">
    <property type="entry name" value="DWB"/>
    <property type="match status" value="1"/>
</dbReference>
<dbReference type="SUPFAM" id="SSF56366">
    <property type="entry name" value="SMAD MH1 domain"/>
    <property type="match status" value="1"/>
</dbReference>
<dbReference type="SUPFAM" id="SSF49879">
    <property type="entry name" value="SMAD/FHA domain"/>
    <property type="match status" value="1"/>
</dbReference>
<dbReference type="PROSITE" id="PS51075">
    <property type="entry name" value="MH1"/>
    <property type="match status" value="1"/>
</dbReference>
<dbReference type="PROSITE" id="PS51076">
    <property type="entry name" value="MH2"/>
    <property type="match status" value="1"/>
</dbReference>
<proteinExistence type="evidence at transcript level"/>
<keyword id="KW-0963">Cytoplasm</keyword>
<keyword id="KW-0217">Developmental protein</keyword>
<keyword id="KW-0238">DNA-binding</keyword>
<keyword id="KW-0479">Metal-binding</keyword>
<keyword id="KW-0539">Nucleus</keyword>
<keyword id="KW-1185">Reference proteome</keyword>
<keyword id="KW-0804">Transcription</keyword>
<keyword id="KW-0805">Transcription regulation</keyword>
<keyword id="KW-0862">Zinc</keyword>
<evidence type="ECO:0000250" key="1"/>
<evidence type="ECO:0000250" key="2">
    <source>
        <dbReference type="UniProtKB" id="Q15796"/>
    </source>
</evidence>
<evidence type="ECO:0000255" key="3">
    <source>
        <dbReference type="PROSITE-ProRule" id="PRU00438"/>
    </source>
</evidence>
<evidence type="ECO:0000255" key="4">
    <source>
        <dbReference type="PROSITE-ProRule" id="PRU00439"/>
    </source>
</evidence>
<evidence type="ECO:0000256" key="5">
    <source>
        <dbReference type="SAM" id="MobiDB-lite"/>
    </source>
</evidence>
<evidence type="ECO:0000269" key="6">
    <source>
    </source>
</evidence>
<evidence type="ECO:0000269" key="7">
    <source>
    </source>
</evidence>
<evidence type="ECO:0000305" key="8"/>
<reference key="1">
    <citation type="journal article" date="1999" name="Mech. Dev.">
        <title>Characterization of zebrafish smad1, smad2 and smad5: the amino-terminus of Smad1 and Smad5 is required for specific function in the embryo.</title>
        <authorList>
            <person name="Mueller F."/>
            <person name="Blader P."/>
            <person name="Rastegar S."/>
            <person name="Fischer N."/>
            <person name="Knoechel W."/>
            <person name="Straehle U."/>
        </authorList>
    </citation>
    <scope>NUCLEOTIDE SEQUENCE [MRNA]</scope>
    <scope>FUNCTION</scope>
    <scope>DEVELOPMENTAL STAGE</scope>
    <source>
        <tissue>Embryo</tissue>
    </source>
</reference>
<reference key="2">
    <citation type="journal article" date="2000" name="Gene">
        <title>Cloning and characterization of zebrafish smad2, smad3 and smad4.</title>
        <authorList>
            <person name="Dick A."/>
            <person name="Mayr T."/>
            <person name="Bauer H."/>
            <person name="Meier A."/>
            <person name="Hammerschmidt M."/>
        </authorList>
    </citation>
    <scope>NUCLEOTIDE SEQUENCE [MRNA]</scope>
    <scope>FUNCTION</scope>
    <scope>DEVELOPMENTAL STAGE</scope>
    <source>
        <tissue>Kidney</tissue>
    </source>
</reference>
<reference key="3">
    <citation type="submission" date="2005-06" db="EMBL/GenBank/DDBJ databases">
        <authorList>
            <consortium name="NIH - Zebrafish Gene Collection (ZGC) project"/>
        </authorList>
    </citation>
    <scope>NUCLEOTIDE SEQUENCE [LARGE SCALE MRNA]</scope>
    <source>
        <tissue>Ovary</tissue>
    </source>
</reference>
<comment type="function">
    <text evidence="6 7">Promotes differentiation of dorsal tissues. May be involved in the mediation of Ndr2 signaling during mesoderm and axis formation during embryogenesis.</text>
</comment>
<comment type="subcellular location">
    <subcellularLocation>
        <location evidence="2">Cytoplasm</location>
    </subcellularLocation>
    <subcellularLocation>
        <location evidence="2">Nucleus</location>
    </subcellularLocation>
    <text evidence="2">In the cytoplasm in the absence of ligand. Migration to the nucleus when complexed with Smad4.</text>
</comment>
<comment type="developmental stage">
    <text evidence="6 7">Expressed both maternally and zygotically. Expressed ubiquitously in the cleavage, blastula, gastrula and early somitogenesis stages. Expression declines during gastrulation. At 26 hours, expressed weakly throughout the head, and more strongly in the mesenchymal neural crest cells behind the eyes and in the endoderm and haemangiogenic region of the tail.</text>
</comment>
<comment type="similarity">
    <text evidence="8">Belongs to the dwarfin/SMAD family.</text>
</comment>
<name>SMAD2_DANRE</name>
<gene>
    <name type="primary">smad2</name>
    <name type="synonym">madh2</name>
</gene>
<sequence>MSSILPFTPPVVKRLLGWKKSASGSSGAGGGGEQNGQEEKWCEKAVKSLVKKLKKTGQLDELEKAITTQNRNTKCVTIPSNCSEIWGLSTPNTIEQWDTSGLYSYPDQTRSLDGRLQVSHRKGLPHVIYCRLWRWPDLHSHHELRAIETCEYAFNLKKDEVCVNPYHYQRVETPVLPPVLVPRHTEILTELPPLDDYTNSIPENTNFPTGIEPPNNYIPETPPPGYISEDGEASDQQMNQSMDTGSPAELSPSTLSPVNHGMDLQPVTYSEPAFWCSIAYYELNQRVGETFHASQPSLTVDGFTDPSNSERFCLGLLSNVNRNATVEMTRRHIGRGVRLYYIGGEVFAECLSDSAIFVQSPNCNQRYGWHPATVCKIPPGCNLKIFNNQEFAALLAQSVNQGFEAVYQLTRMCTIRMSFVKGWGAEYRRQTVTSTPCWIELHLNGPLQWLDKVLTQMGSPSVRCSSMS</sequence>